<gene>
    <name evidence="1" type="primary">lpxD</name>
    <name type="ordered locus">SCH_0226</name>
</gene>
<name>LPXD_SALCH</name>
<comment type="function">
    <text evidence="1">Catalyzes the N-acylation of UDP-3-O-(hydroxytetradecanoyl)glucosamine using 3-hydroxytetradecanoyl-ACP as the acyl donor. Is involved in the biosynthesis of lipid A, a phosphorylated glycolipid that anchors the lipopolysaccharide to the outer membrane of the cell.</text>
</comment>
<comment type="catalytic activity">
    <reaction evidence="1">
        <text>a UDP-3-O-[(3R)-3-hydroxyacyl]-alpha-D-glucosamine + a (3R)-hydroxyacyl-[ACP] = a UDP-2-N,3-O-bis[(3R)-3-hydroxyacyl]-alpha-D-glucosamine + holo-[ACP] + H(+)</text>
        <dbReference type="Rhea" id="RHEA:53836"/>
        <dbReference type="Rhea" id="RHEA-COMP:9685"/>
        <dbReference type="Rhea" id="RHEA-COMP:9945"/>
        <dbReference type="ChEBI" id="CHEBI:15378"/>
        <dbReference type="ChEBI" id="CHEBI:64479"/>
        <dbReference type="ChEBI" id="CHEBI:78827"/>
        <dbReference type="ChEBI" id="CHEBI:137740"/>
        <dbReference type="ChEBI" id="CHEBI:137748"/>
        <dbReference type="EC" id="2.3.1.191"/>
    </reaction>
</comment>
<comment type="catalytic activity">
    <reaction evidence="1">
        <text>UDP-3-O-[(3R)-3-hydroxytetradecanoyl]-alpha-D-glucosamine + (3R)-hydroxytetradecanoyl-[ACP] = UDP-2-N,3-O-bis[(3R)-3-hydroxytetradecanoyl]-alpha-D-glucosamine + holo-[ACP] + H(+)</text>
        <dbReference type="Rhea" id="RHEA:17817"/>
        <dbReference type="Rhea" id="RHEA-COMP:9646"/>
        <dbReference type="Rhea" id="RHEA-COMP:9685"/>
        <dbReference type="ChEBI" id="CHEBI:15378"/>
        <dbReference type="ChEBI" id="CHEBI:64479"/>
        <dbReference type="ChEBI" id="CHEBI:71573"/>
        <dbReference type="ChEBI" id="CHEBI:78474"/>
        <dbReference type="ChEBI" id="CHEBI:78847"/>
    </reaction>
</comment>
<comment type="pathway">
    <text evidence="1">Glycolipid biosynthesis; lipid IV(A) biosynthesis; lipid IV(A) from (3R)-3-hydroxytetradecanoyl-[acyl-carrier-protein] and UDP-N-acetyl-alpha-D-glucosamine: step 3/6.</text>
</comment>
<comment type="subunit">
    <text evidence="1">Homotrimer.</text>
</comment>
<comment type="similarity">
    <text evidence="1">Belongs to the transferase hexapeptide repeat family. LpxD subfamily.</text>
</comment>
<accession>Q57T29</accession>
<sequence>MPSIRLADLAEQLDAELHGDGDIVITGVASMQSATTGHITFMVNPKYREHLGLCQASAVVMTQDDLPFAKSAALVVKNPYLTYARMAQILDTTPQPAQNIAPSAVIDATATLGSNVSVGANAVIESGVQLGDNVVIGAGCFVGKNSKIGAGSRLWANVTIYHDIQIGENCLIQSSTVIGADGFGYANDRGNWVKIPQLGRVIIGDRVEIGACTTIDRGALDDTVIGNGVIIDNQCQIAHNVVIGDNTAVAGGVIMAGSLKIGRYCMIGGASVINGHMEICDKVTVTGMGMVMRPITEPGVYSSGIPLQPNKVWRKTAALVMNIDDMSKRLKAIERTVNQQD</sequence>
<dbReference type="EC" id="2.3.1.191" evidence="1"/>
<dbReference type="EMBL" id="AE017220">
    <property type="protein sequence ID" value="AAX64132.1"/>
    <property type="molecule type" value="Genomic_DNA"/>
</dbReference>
<dbReference type="RefSeq" id="WP_001539055.1">
    <property type="nucleotide sequence ID" value="NC_006905.1"/>
</dbReference>
<dbReference type="SMR" id="Q57T29"/>
<dbReference type="KEGG" id="sec:SCH_0226"/>
<dbReference type="HOGENOM" id="CLU_049865_0_1_6"/>
<dbReference type="UniPathway" id="UPA00359">
    <property type="reaction ID" value="UER00479"/>
</dbReference>
<dbReference type="Proteomes" id="UP000000538">
    <property type="component" value="Chromosome"/>
</dbReference>
<dbReference type="GO" id="GO:0016020">
    <property type="term" value="C:membrane"/>
    <property type="evidence" value="ECO:0007669"/>
    <property type="project" value="GOC"/>
</dbReference>
<dbReference type="GO" id="GO:0016410">
    <property type="term" value="F:N-acyltransferase activity"/>
    <property type="evidence" value="ECO:0007669"/>
    <property type="project" value="InterPro"/>
</dbReference>
<dbReference type="GO" id="GO:0103118">
    <property type="term" value="F:UDP-3-O-(R-3-hydroxymyristoyl)-glucosamine N-acyltransferase activity"/>
    <property type="evidence" value="ECO:0007669"/>
    <property type="project" value="UniProtKB-EC"/>
</dbReference>
<dbReference type="GO" id="GO:0009245">
    <property type="term" value="P:lipid A biosynthetic process"/>
    <property type="evidence" value="ECO:0007669"/>
    <property type="project" value="UniProtKB-UniRule"/>
</dbReference>
<dbReference type="CDD" id="cd03352">
    <property type="entry name" value="LbH_LpxD"/>
    <property type="match status" value="1"/>
</dbReference>
<dbReference type="FunFam" id="1.20.5.170:FF:000032">
    <property type="entry name" value="UDP-3-O-(3-hydroxymyristoyl)glucosamine N-acyltransferase"/>
    <property type="match status" value="1"/>
</dbReference>
<dbReference type="FunFam" id="2.160.10.10:FF:000005">
    <property type="entry name" value="UDP-3-O-(3-hydroxymyristoyl)glucosamine N-acyltransferase"/>
    <property type="match status" value="1"/>
</dbReference>
<dbReference type="FunFam" id="3.40.1390.10:FF:000001">
    <property type="entry name" value="UDP-3-O-(3-hydroxymyristoyl)glucosamine N-acyltransferase"/>
    <property type="match status" value="1"/>
</dbReference>
<dbReference type="Gene3D" id="1.20.5.170">
    <property type="match status" value="1"/>
</dbReference>
<dbReference type="Gene3D" id="2.160.10.10">
    <property type="entry name" value="Hexapeptide repeat proteins"/>
    <property type="match status" value="1"/>
</dbReference>
<dbReference type="Gene3D" id="3.40.1390.10">
    <property type="entry name" value="MurE/MurF, N-terminal domain"/>
    <property type="match status" value="1"/>
</dbReference>
<dbReference type="HAMAP" id="MF_00523">
    <property type="entry name" value="LpxD"/>
    <property type="match status" value="1"/>
</dbReference>
<dbReference type="InterPro" id="IPR001451">
    <property type="entry name" value="Hexapep"/>
</dbReference>
<dbReference type="InterPro" id="IPR018357">
    <property type="entry name" value="Hexapep_transf_CS"/>
</dbReference>
<dbReference type="InterPro" id="IPR007691">
    <property type="entry name" value="LpxD"/>
</dbReference>
<dbReference type="InterPro" id="IPR011004">
    <property type="entry name" value="Trimer_LpxA-like_sf"/>
</dbReference>
<dbReference type="InterPro" id="IPR020573">
    <property type="entry name" value="UDP_GlcNAc_AcTrfase_non-rep"/>
</dbReference>
<dbReference type="NCBIfam" id="TIGR01853">
    <property type="entry name" value="lipid_A_lpxD"/>
    <property type="match status" value="1"/>
</dbReference>
<dbReference type="NCBIfam" id="NF002060">
    <property type="entry name" value="PRK00892.1"/>
    <property type="match status" value="1"/>
</dbReference>
<dbReference type="PANTHER" id="PTHR43378">
    <property type="entry name" value="UDP-3-O-ACYLGLUCOSAMINE N-ACYLTRANSFERASE"/>
    <property type="match status" value="1"/>
</dbReference>
<dbReference type="PANTHER" id="PTHR43378:SF2">
    <property type="entry name" value="UDP-3-O-ACYLGLUCOSAMINE N-ACYLTRANSFERASE 1, MITOCHONDRIAL-RELATED"/>
    <property type="match status" value="1"/>
</dbReference>
<dbReference type="Pfam" id="PF00132">
    <property type="entry name" value="Hexapep"/>
    <property type="match status" value="3"/>
</dbReference>
<dbReference type="Pfam" id="PF04613">
    <property type="entry name" value="LpxD"/>
    <property type="match status" value="1"/>
</dbReference>
<dbReference type="SUPFAM" id="SSF51161">
    <property type="entry name" value="Trimeric LpxA-like enzymes"/>
    <property type="match status" value="1"/>
</dbReference>
<dbReference type="PROSITE" id="PS00101">
    <property type="entry name" value="HEXAPEP_TRANSFERASES"/>
    <property type="match status" value="4"/>
</dbReference>
<organism>
    <name type="scientific">Salmonella choleraesuis (strain SC-B67)</name>
    <dbReference type="NCBI Taxonomy" id="321314"/>
    <lineage>
        <taxon>Bacteria</taxon>
        <taxon>Pseudomonadati</taxon>
        <taxon>Pseudomonadota</taxon>
        <taxon>Gammaproteobacteria</taxon>
        <taxon>Enterobacterales</taxon>
        <taxon>Enterobacteriaceae</taxon>
        <taxon>Salmonella</taxon>
    </lineage>
</organism>
<proteinExistence type="inferred from homology"/>
<reference key="1">
    <citation type="journal article" date="2005" name="Nucleic Acids Res.">
        <title>The genome sequence of Salmonella enterica serovar Choleraesuis, a highly invasive and resistant zoonotic pathogen.</title>
        <authorList>
            <person name="Chiu C.-H."/>
            <person name="Tang P."/>
            <person name="Chu C."/>
            <person name="Hu S."/>
            <person name="Bao Q."/>
            <person name="Yu J."/>
            <person name="Chou Y.-Y."/>
            <person name="Wang H.-S."/>
            <person name="Lee Y.-S."/>
        </authorList>
    </citation>
    <scope>NUCLEOTIDE SEQUENCE [LARGE SCALE GENOMIC DNA]</scope>
    <source>
        <strain>SC-B67</strain>
    </source>
</reference>
<evidence type="ECO:0000255" key="1">
    <source>
        <dbReference type="HAMAP-Rule" id="MF_00523"/>
    </source>
</evidence>
<protein>
    <recommendedName>
        <fullName evidence="1">UDP-3-O-(3-hydroxymyristoyl)glucosamine N-acyltransferase</fullName>
        <shortName evidence="1">UDP-3-O-(3-OHC14)-GlcN N-acyltransferase</shortName>
        <ecNumber evidence="1">2.3.1.191</ecNumber>
    </recommendedName>
    <alternativeName>
        <fullName evidence="1">UDP-3-O-(3-hydroxytetradecanoyl)glucosamine N-acyltransferase</fullName>
    </alternativeName>
</protein>
<keyword id="KW-0012">Acyltransferase</keyword>
<keyword id="KW-0441">Lipid A biosynthesis</keyword>
<keyword id="KW-0444">Lipid biosynthesis</keyword>
<keyword id="KW-0443">Lipid metabolism</keyword>
<keyword id="KW-0677">Repeat</keyword>
<keyword id="KW-0808">Transferase</keyword>
<feature type="chain" id="PRO_0000264432" description="UDP-3-O-(3-hydroxymyristoyl)glucosamine N-acyltransferase">
    <location>
        <begin position="1"/>
        <end position="341"/>
    </location>
</feature>
<feature type="active site" description="Proton acceptor" evidence="1">
    <location>
        <position position="239"/>
    </location>
</feature>